<sequence length="409" mass="46967">MSFLKLFKQFVVTGFNKKLLFLSETTCWSYEIQPDLPLEKCRPKKYFDADSDSDEESTQQPQKPPTNGNGTADNVQIVALEVHEGKSLLAVATSDKSLFLFAIDPEGDETNKDRLKLLSRRMVSRTSSCMKFAASGKFLVVCDKGGDCYRYDCDDDDCKKPGRWLLGHMSQVLDVLVPDNERFIITSDRDEKIRVTNHPDCHSIETFCLGHGEFVSQLEFVTAKDGKSRLLSLSGDKTLRLWDYETGKEVARKELSHPGNRFAVKQLLDGTLLVAVLFYEPTEMAIYKLTEVESLTSETIQTLKTNQNEVFSSFAFDERNNLLSLVVDKVTEKISLKWYQFEQENCKFNDLTPNPLEKLFFDNTENDKISYVDSVSFLFKKKFDNLKDYQERKRRRIVEGGKYNYGGRM</sequence>
<feature type="chain" id="PRO_0000370539" description="tRNA (guanine-N(7)-)-methyltransferase non-catalytic subunit wuho">
    <location>
        <begin position="1"/>
        <end position="409"/>
    </location>
</feature>
<feature type="repeat" description="WD 1">
    <location>
        <begin position="72"/>
        <end position="111"/>
    </location>
</feature>
<feature type="repeat" description="WD 2">
    <location>
        <begin position="122"/>
        <end position="161"/>
    </location>
</feature>
<feature type="repeat" description="WD 3">
    <location>
        <begin position="167"/>
        <end position="206"/>
    </location>
</feature>
<feature type="repeat" description="WD 4">
    <location>
        <begin position="210"/>
        <end position="252"/>
    </location>
</feature>
<feature type="region of interest" description="Disordered" evidence="2">
    <location>
        <begin position="48"/>
        <end position="72"/>
    </location>
</feature>
<feature type="compositionally biased region" description="Polar residues" evidence="2">
    <location>
        <begin position="58"/>
        <end position="72"/>
    </location>
</feature>
<name>WUHO_AEDAE</name>
<dbReference type="EMBL" id="CH477308">
    <property type="protein sequence ID" value="EAT44042.1"/>
    <property type="molecule type" value="Genomic_DNA"/>
</dbReference>
<dbReference type="RefSeq" id="XP_001649398.1">
    <property type="nucleotide sequence ID" value="XM_001649348.1"/>
</dbReference>
<dbReference type="SMR" id="Q17CH9"/>
<dbReference type="FunCoup" id="Q17CH9">
    <property type="interactions" value="621"/>
</dbReference>
<dbReference type="STRING" id="7159.Q17CH9"/>
<dbReference type="PaxDb" id="7159-AAEL004558-PA"/>
<dbReference type="GeneID" id="5565039"/>
<dbReference type="KEGG" id="aag:5565039"/>
<dbReference type="CTD" id="31566"/>
<dbReference type="VEuPathDB" id="VectorBase:AAEL004558"/>
<dbReference type="eggNOG" id="KOG3914">
    <property type="taxonomic scope" value="Eukaryota"/>
</dbReference>
<dbReference type="HOGENOM" id="CLU_054270_0_0_1"/>
<dbReference type="InParanoid" id="Q17CH9"/>
<dbReference type="OMA" id="CYPNTYN"/>
<dbReference type="OrthoDB" id="371245at2759"/>
<dbReference type="PhylomeDB" id="Q17CH9"/>
<dbReference type="UniPathway" id="UPA00989"/>
<dbReference type="Proteomes" id="UP000008820">
    <property type="component" value="Unassembled WGS sequence"/>
</dbReference>
<dbReference type="Proteomes" id="UP000682892">
    <property type="component" value="Chromosome 1"/>
</dbReference>
<dbReference type="GO" id="GO:0005829">
    <property type="term" value="C:cytosol"/>
    <property type="evidence" value="ECO:0007669"/>
    <property type="project" value="TreeGrafter"/>
</dbReference>
<dbReference type="GO" id="GO:0005634">
    <property type="term" value="C:nucleus"/>
    <property type="evidence" value="ECO:0007669"/>
    <property type="project" value="UniProtKB-SubCell"/>
</dbReference>
<dbReference type="GO" id="GO:0043527">
    <property type="term" value="C:tRNA methyltransferase complex"/>
    <property type="evidence" value="ECO:0007669"/>
    <property type="project" value="TreeGrafter"/>
</dbReference>
<dbReference type="GO" id="GO:0106004">
    <property type="term" value="P:tRNA (guanine-N7)-methylation"/>
    <property type="evidence" value="ECO:0007669"/>
    <property type="project" value="UniProtKB-UniRule"/>
</dbReference>
<dbReference type="Gene3D" id="2.130.10.10">
    <property type="entry name" value="YVTN repeat-like/Quinoprotein amine dehydrogenase"/>
    <property type="match status" value="1"/>
</dbReference>
<dbReference type="HAMAP" id="MF_03056">
    <property type="entry name" value="TRM82"/>
    <property type="match status" value="1"/>
</dbReference>
<dbReference type="InterPro" id="IPR028884">
    <property type="entry name" value="Trm82"/>
</dbReference>
<dbReference type="InterPro" id="IPR015943">
    <property type="entry name" value="WD40/YVTN_repeat-like_dom_sf"/>
</dbReference>
<dbReference type="InterPro" id="IPR036322">
    <property type="entry name" value="WD40_repeat_dom_sf"/>
</dbReference>
<dbReference type="InterPro" id="IPR001680">
    <property type="entry name" value="WD40_rpt"/>
</dbReference>
<dbReference type="PANTHER" id="PTHR16288:SF0">
    <property type="entry name" value="TRNA (GUANINE-N(7)-)-METHYLTRANSFERASE NON-CATALYTIC SUBUNIT WDR4"/>
    <property type="match status" value="1"/>
</dbReference>
<dbReference type="PANTHER" id="PTHR16288">
    <property type="entry name" value="WD40 REPEAT PROTEIN 4"/>
    <property type="match status" value="1"/>
</dbReference>
<dbReference type="SMART" id="SM00320">
    <property type="entry name" value="WD40"/>
    <property type="match status" value="4"/>
</dbReference>
<dbReference type="SUPFAM" id="SSF50978">
    <property type="entry name" value="WD40 repeat-like"/>
    <property type="match status" value="1"/>
</dbReference>
<dbReference type="PROSITE" id="PS50082">
    <property type="entry name" value="WD_REPEATS_2"/>
    <property type="match status" value="1"/>
</dbReference>
<dbReference type="PROSITE" id="PS50294">
    <property type="entry name" value="WD_REPEATS_REGION"/>
    <property type="match status" value="1"/>
</dbReference>
<accession>Q17CH9</accession>
<reference key="1">
    <citation type="journal article" date="2007" name="Science">
        <title>Genome sequence of Aedes aegypti, a major arbovirus vector.</title>
        <authorList>
            <person name="Nene V."/>
            <person name="Wortman J.R."/>
            <person name="Lawson D."/>
            <person name="Haas B.J."/>
            <person name="Kodira C.D."/>
            <person name="Tu Z.J."/>
            <person name="Loftus B.J."/>
            <person name="Xi Z."/>
            <person name="Megy K."/>
            <person name="Grabherr M."/>
            <person name="Ren Q."/>
            <person name="Zdobnov E.M."/>
            <person name="Lobo N.F."/>
            <person name="Campbell K.S."/>
            <person name="Brown S.E."/>
            <person name="Bonaldo M.F."/>
            <person name="Zhu J."/>
            <person name="Sinkins S.P."/>
            <person name="Hogenkamp D.G."/>
            <person name="Amedeo P."/>
            <person name="Arensburger P."/>
            <person name="Atkinson P.W."/>
            <person name="Bidwell S.L."/>
            <person name="Biedler J."/>
            <person name="Birney E."/>
            <person name="Bruggner R.V."/>
            <person name="Costas J."/>
            <person name="Coy M.R."/>
            <person name="Crabtree J."/>
            <person name="Crawford M."/>
            <person name="DeBruyn B."/>
            <person name="DeCaprio D."/>
            <person name="Eiglmeier K."/>
            <person name="Eisenstadt E."/>
            <person name="El-Dorry H."/>
            <person name="Gelbart W.M."/>
            <person name="Gomes S.L."/>
            <person name="Hammond M."/>
            <person name="Hannick L.I."/>
            <person name="Hogan J.R."/>
            <person name="Holmes M.H."/>
            <person name="Jaffe D."/>
            <person name="Johnston S.J."/>
            <person name="Kennedy R.C."/>
            <person name="Koo H."/>
            <person name="Kravitz S."/>
            <person name="Kriventseva E.V."/>
            <person name="Kulp D."/>
            <person name="Labutti K."/>
            <person name="Lee E."/>
            <person name="Li S."/>
            <person name="Lovin D.D."/>
            <person name="Mao C."/>
            <person name="Mauceli E."/>
            <person name="Menck C.F."/>
            <person name="Miller J.R."/>
            <person name="Montgomery P."/>
            <person name="Mori A."/>
            <person name="Nascimento A.L."/>
            <person name="Naveira H.F."/>
            <person name="Nusbaum C."/>
            <person name="O'Leary S.B."/>
            <person name="Orvis J."/>
            <person name="Pertea M."/>
            <person name="Quesneville H."/>
            <person name="Reidenbach K.R."/>
            <person name="Rogers Y.-H.C."/>
            <person name="Roth C.W."/>
            <person name="Schneider J.R."/>
            <person name="Schatz M."/>
            <person name="Shumway M."/>
            <person name="Stanke M."/>
            <person name="Stinson E.O."/>
            <person name="Tubio J.M.C."/>
            <person name="Vanzee J.P."/>
            <person name="Verjovski-Almeida S."/>
            <person name="Werner D."/>
            <person name="White O.R."/>
            <person name="Wyder S."/>
            <person name="Zeng Q."/>
            <person name="Zhao Q."/>
            <person name="Zhao Y."/>
            <person name="Hill C.A."/>
            <person name="Raikhel A.S."/>
            <person name="Soares M.B."/>
            <person name="Knudson D.L."/>
            <person name="Lee N.H."/>
            <person name="Galagan J."/>
            <person name="Salzberg S.L."/>
            <person name="Paulsen I.T."/>
            <person name="Dimopoulos G."/>
            <person name="Collins F.H."/>
            <person name="Bruce B."/>
            <person name="Fraser-Liggett C.M."/>
            <person name="Severson D.W."/>
        </authorList>
    </citation>
    <scope>NUCLEOTIDE SEQUENCE [LARGE SCALE GENOMIC DNA]</scope>
    <source>
        <strain>LVPib12</strain>
    </source>
</reference>
<proteinExistence type="inferred from homology"/>
<evidence type="ECO:0000255" key="1">
    <source>
        <dbReference type="HAMAP-Rule" id="MF_03056"/>
    </source>
</evidence>
<evidence type="ECO:0000256" key="2">
    <source>
        <dbReference type="SAM" id="MobiDB-lite"/>
    </source>
</evidence>
<protein>
    <recommendedName>
        <fullName evidence="1">tRNA (guanine-N(7)-)-methyltransferase non-catalytic subunit wuho</fullName>
    </recommendedName>
</protein>
<gene>
    <name evidence="1" type="primary">wuho</name>
    <name type="ORF">AAEL004558</name>
</gene>
<organism>
    <name type="scientific">Aedes aegypti</name>
    <name type="common">Yellowfever mosquito</name>
    <name type="synonym">Culex aegypti</name>
    <dbReference type="NCBI Taxonomy" id="7159"/>
    <lineage>
        <taxon>Eukaryota</taxon>
        <taxon>Metazoa</taxon>
        <taxon>Ecdysozoa</taxon>
        <taxon>Arthropoda</taxon>
        <taxon>Hexapoda</taxon>
        <taxon>Insecta</taxon>
        <taxon>Pterygota</taxon>
        <taxon>Neoptera</taxon>
        <taxon>Endopterygota</taxon>
        <taxon>Diptera</taxon>
        <taxon>Nematocera</taxon>
        <taxon>Culicoidea</taxon>
        <taxon>Culicidae</taxon>
        <taxon>Culicinae</taxon>
        <taxon>Aedini</taxon>
        <taxon>Aedes</taxon>
        <taxon>Stegomyia</taxon>
    </lineage>
</organism>
<comment type="function">
    <text evidence="1">Required for the formation of N(7)-methylguanine at position 46 (m7G46) in tRNA. In the complex, it is required to stabilize and induce conformational changes of the catalytic subunit.</text>
</comment>
<comment type="pathway">
    <text evidence="1">tRNA modification; N(7)-methylguanine-tRNA biosynthesis.</text>
</comment>
<comment type="subunit">
    <text evidence="1">Forms a heterodimer with the catalytic subunit.</text>
</comment>
<comment type="subcellular location">
    <subcellularLocation>
        <location evidence="1">Nucleus</location>
    </subcellularLocation>
</comment>
<comment type="similarity">
    <text evidence="1">Belongs to the WD repeat TRM82 family.</text>
</comment>
<keyword id="KW-0539">Nucleus</keyword>
<keyword id="KW-1185">Reference proteome</keyword>
<keyword id="KW-0677">Repeat</keyword>
<keyword id="KW-0819">tRNA processing</keyword>
<keyword id="KW-0853">WD repeat</keyword>